<sequence>MTPISQTPGLLAEAMVDLGAIEHNVRVLREHAGHAQLMAVVKADGYGHGATRVAQTALGAGAAELGVATVDEALALRADGITAPVLAWLHPPGIDFGPALLADVQVAVSSLRQLDELLHAVRRTGRTATVTVKVDTGLNRNGVGPAQFPAMLTALRQAMAEDAVRLRGLMSHMVYADKPDDSINDVQAQRFTAFLAQAREQGVRFEVAHLSNSSATMARPDLTFDLVRPGIAVYGLSPVPALGDMGLVPAMTVKCAVALVKSIRAGEGVSYGHTWIAPRDTNLALLPIGYADGVFRSLGGRLEVLINGRRCPGVGRICMDQFMVDLGPGPLDVAEGDEAILFGPGIRGEPTAQDWADLVGTIHYEVVTSPRGRITRTYREAENR</sequence>
<gene>
    <name evidence="4" type="primary">alr</name>
    <name type="ordered locus">Rv3423c</name>
    <name type="ORF">MTCY78.06</name>
</gene>
<keyword id="KW-0002">3D-structure</keyword>
<keyword id="KW-0413">Isomerase</keyword>
<keyword id="KW-0663">Pyridoxal phosphate</keyword>
<keyword id="KW-1185">Reference proteome</keyword>
<organism>
    <name type="scientific">Mycobacterium tuberculosis (strain ATCC 25618 / H37Rv)</name>
    <dbReference type="NCBI Taxonomy" id="83332"/>
    <lineage>
        <taxon>Bacteria</taxon>
        <taxon>Bacillati</taxon>
        <taxon>Actinomycetota</taxon>
        <taxon>Actinomycetes</taxon>
        <taxon>Mycobacteriales</taxon>
        <taxon>Mycobacteriaceae</taxon>
        <taxon>Mycobacterium</taxon>
        <taxon>Mycobacterium tuberculosis complex</taxon>
    </lineage>
</organism>
<evidence type="ECO:0000255" key="1">
    <source>
        <dbReference type="HAMAP-Rule" id="MF_01201"/>
    </source>
</evidence>
<evidence type="ECO:0000269" key="2">
    <source>
    </source>
</evidence>
<evidence type="ECO:0000269" key="3">
    <source>
    </source>
</evidence>
<evidence type="ECO:0000303" key="4">
    <source>
    </source>
</evidence>
<evidence type="ECO:0000305" key="5">
    <source>
    </source>
</evidence>
<evidence type="ECO:0007829" key="6">
    <source>
        <dbReference type="PDB" id="6SCZ"/>
    </source>
</evidence>
<protein>
    <recommendedName>
        <fullName evidence="1 4">Alanine racemase</fullName>
        <ecNumber evidence="1 2">5.1.1.1</ecNumber>
    </recommendedName>
</protein>
<dbReference type="EC" id="5.1.1.1" evidence="1 2"/>
<dbReference type="EMBL" id="AF172731">
    <property type="protein sequence ID" value="AAD51033.1"/>
    <property type="status" value="ALT_INIT"/>
    <property type="molecule type" value="Genomic_DNA"/>
</dbReference>
<dbReference type="EMBL" id="AL123456">
    <property type="protein sequence ID" value="CCP46245.1"/>
    <property type="status" value="ALT_INIT"/>
    <property type="molecule type" value="Genomic_DNA"/>
</dbReference>
<dbReference type="PIR" id="D70738">
    <property type="entry name" value="D70738"/>
</dbReference>
<dbReference type="RefSeq" id="NP_217940.1">
    <property type="nucleotide sequence ID" value="NC_000962.3"/>
</dbReference>
<dbReference type="RefSeq" id="WP_003418047.1">
    <property type="nucleotide sequence ID" value="NC_000962.3"/>
</dbReference>
<dbReference type="PDB" id="1XFC">
    <property type="method" value="X-ray"/>
    <property type="resolution" value="1.90 A"/>
    <property type="chains" value="A/B=1-384"/>
</dbReference>
<dbReference type="PDB" id="6SCZ">
    <property type="method" value="X-ray"/>
    <property type="resolution" value="1.57 A"/>
    <property type="chains" value="A/B=1-384"/>
</dbReference>
<dbReference type="PDB" id="8AHW">
    <property type="method" value="X-ray"/>
    <property type="resolution" value="1.58 A"/>
    <property type="chains" value="A/B=1-384"/>
</dbReference>
<dbReference type="PDB" id="8B8H">
    <property type="method" value="X-ray"/>
    <property type="resolution" value="1.78 A"/>
    <property type="chains" value="A/B=1-384"/>
</dbReference>
<dbReference type="PDBsum" id="1XFC"/>
<dbReference type="PDBsum" id="6SCZ"/>
<dbReference type="PDBsum" id="8AHW"/>
<dbReference type="PDBsum" id="8B8H"/>
<dbReference type="SMR" id="P9WQA9"/>
<dbReference type="FunCoup" id="P9WQA9">
    <property type="interactions" value="53"/>
</dbReference>
<dbReference type="STRING" id="83332.Rv3423c"/>
<dbReference type="ChEMBL" id="CHEMBL2031"/>
<dbReference type="DrugCentral" id="P9WQA9"/>
<dbReference type="PaxDb" id="83332-Rv3423c"/>
<dbReference type="DNASU" id="887634"/>
<dbReference type="GeneID" id="887634"/>
<dbReference type="KEGG" id="mtu:Rv3423c"/>
<dbReference type="PATRIC" id="fig|83332.12.peg.3820"/>
<dbReference type="TubercuList" id="Rv3423c"/>
<dbReference type="eggNOG" id="COG0787">
    <property type="taxonomic scope" value="Bacteria"/>
</dbReference>
<dbReference type="InParanoid" id="P9WQA9"/>
<dbReference type="OrthoDB" id="9813814at2"/>
<dbReference type="BRENDA" id="5.1.1.1">
    <property type="organism ID" value="3445"/>
</dbReference>
<dbReference type="SABIO-RK" id="P9WQA9"/>
<dbReference type="UniPathway" id="UPA00042">
    <property type="reaction ID" value="UER00497"/>
</dbReference>
<dbReference type="EvolutionaryTrace" id="P9WQA9"/>
<dbReference type="PRO" id="PR:P9WQA9"/>
<dbReference type="Proteomes" id="UP000001584">
    <property type="component" value="Chromosome"/>
</dbReference>
<dbReference type="GO" id="GO:0005829">
    <property type="term" value="C:cytosol"/>
    <property type="evidence" value="ECO:0000318"/>
    <property type="project" value="GO_Central"/>
</dbReference>
<dbReference type="GO" id="GO:0008784">
    <property type="term" value="F:alanine racemase activity"/>
    <property type="evidence" value="ECO:0000314"/>
    <property type="project" value="MTBBASE"/>
</dbReference>
<dbReference type="GO" id="GO:0030170">
    <property type="term" value="F:pyridoxal phosphate binding"/>
    <property type="evidence" value="ECO:0000314"/>
    <property type="project" value="MTBBASE"/>
</dbReference>
<dbReference type="GO" id="GO:0030632">
    <property type="term" value="P:D-alanine biosynthetic process"/>
    <property type="evidence" value="ECO:0000314"/>
    <property type="project" value="MTBBASE"/>
</dbReference>
<dbReference type="GO" id="GO:0009252">
    <property type="term" value="P:peptidoglycan biosynthetic process"/>
    <property type="evidence" value="ECO:0000314"/>
    <property type="project" value="MTBBASE"/>
</dbReference>
<dbReference type="CDD" id="cd00430">
    <property type="entry name" value="PLPDE_III_AR"/>
    <property type="match status" value="1"/>
</dbReference>
<dbReference type="FunFam" id="2.40.37.10:FF:000015">
    <property type="entry name" value="Alanine racemase"/>
    <property type="match status" value="1"/>
</dbReference>
<dbReference type="FunFam" id="3.20.20.10:FF:000002">
    <property type="entry name" value="Alanine racemase"/>
    <property type="match status" value="1"/>
</dbReference>
<dbReference type="Gene3D" id="3.20.20.10">
    <property type="entry name" value="Alanine racemase"/>
    <property type="match status" value="1"/>
</dbReference>
<dbReference type="Gene3D" id="2.40.37.10">
    <property type="entry name" value="Lyase, Ornithine Decarboxylase, Chain A, domain 1"/>
    <property type="match status" value="1"/>
</dbReference>
<dbReference type="HAMAP" id="MF_01201">
    <property type="entry name" value="Ala_racemase"/>
    <property type="match status" value="1"/>
</dbReference>
<dbReference type="InterPro" id="IPR000821">
    <property type="entry name" value="Ala_racemase"/>
</dbReference>
<dbReference type="InterPro" id="IPR009006">
    <property type="entry name" value="Ala_racemase/Decarboxylase_C"/>
</dbReference>
<dbReference type="InterPro" id="IPR011079">
    <property type="entry name" value="Ala_racemase_C"/>
</dbReference>
<dbReference type="InterPro" id="IPR001608">
    <property type="entry name" value="Ala_racemase_N"/>
</dbReference>
<dbReference type="InterPro" id="IPR020622">
    <property type="entry name" value="Ala_racemase_pyridoxalP-BS"/>
</dbReference>
<dbReference type="InterPro" id="IPR029066">
    <property type="entry name" value="PLP-binding_barrel"/>
</dbReference>
<dbReference type="NCBIfam" id="TIGR00492">
    <property type="entry name" value="alr"/>
    <property type="match status" value="1"/>
</dbReference>
<dbReference type="PANTHER" id="PTHR30511">
    <property type="entry name" value="ALANINE RACEMASE"/>
    <property type="match status" value="1"/>
</dbReference>
<dbReference type="PANTHER" id="PTHR30511:SF0">
    <property type="entry name" value="ALANINE RACEMASE, CATABOLIC-RELATED"/>
    <property type="match status" value="1"/>
</dbReference>
<dbReference type="Pfam" id="PF00842">
    <property type="entry name" value="Ala_racemase_C"/>
    <property type="match status" value="1"/>
</dbReference>
<dbReference type="Pfam" id="PF01168">
    <property type="entry name" value="Ala_racemase_N"/>
    <property type="match status" value="1"/>
</dbReference>
<dbReference type="PRINTS" id="PR00992">
    <property type="entry name" value="ALARACEMASE"/>
</dbReference>
<dbReference type="SMART" id="SM01005">
    <property type="entry name" value="Ala_racemase_C"/>
    <property type="match status" value="1"/>
</dbReference>
<dbReference type="SUPFAM" id="SSF50621">
    <property type="entry name" value="Alanine racemase C-terminal domain-like"/>
    <property type="match status" value="1"/>
</dbReference>
<dbReference type="SUPFAM" id="SSF51419">
    <property type="entry name" value="PLP-binding barrel"/>
    <property type="match status" value="1"/>
</dbReference>
<dbReference type="PROSITE" id="PS00395">
    <property type="entry name" value="ALANINE_RACEMASE"/>
    <property type="match status" value="1"/>
</dbReference>
<proteinExistence type="evidence at protein level"/>
<accession>P9WQA9</accession>
<accession>L0TFK3</accession>
<accession>P0A4X2</accession>
<accession>Q50705</accession>
<feature type="chain" id="PRO_0000114539" description="Alanine racemase">
    <location>
        <begin position="1"/>
        <end position="384"/>
    </location>
</feature>
<feature type="active site" description="Proton acceptor; specific for D-alanine" evidence="1">
    <location>
        <position position="42"/>
    </location>
</feature>
<feature type="active site" description="Proton acceptor; specific for L-alanine" evidence="1">
    <location>
        <position position="271"/>
    </location>
</feature>
<feature type="binding site" evidence="1">
    <location>
        <position position="140"/>
    </location>
    <ligand>
        <name>substrate</name>
    </ligand>
</feature>
<feature type="binding site" evidence="1">
    <location>
        <position position="319"/>
    </location>
    <ligand>
        <name>substrate</name>
    </ligand>
</feature>
<feature type="modified residue" description="N6-(pyridoxal phosphate)lysine" evidence="3">
    <location>
        <position position="42"/>
    </location>
</feature>
<feature type="strand" evidence="6">
    <location>
        <begin position="11"/>
        <end position="17"/>
    </location>
</feature>
<feature type="helix" evidence="6">
    <location>
        <begin position="18"/>
        <end position="32"/>
    </location>
</feature>
<feature type="strand" evidence="6">
    <location>
        <begin position="35"/>
        <end position="40"/>
    </location>
</feature>
<feature type="helix" evidence="6">
    <location>
        <begin position="42"/>
        <end position="46"/>
    </location>
</feature>
<feature type="helix" evidence="6">
    <location>
        <begin position="50"/>
        <end position="59"/>
    </location>
</feature>
<feature type="strand" evidence="6">
    <location>
        <begin position="64"/>
        <end position="69"/>
    </location>
</feature>
<feature type="helix" evidence="6">
    <location>
        <begin position="70"/>
        <end position="78"/>
    </location>
</feature>
<feature type="strand" evidence="6">
    <location>
        <begin position="85"/>
        <end position="87"/>
    </location>
</feature>
<feature type="helix" evidence="6">
    <location>
        <begin position="97"/>
        <end position="101"/>
    </location>
</feature>
<feature type="strand" evidence="6">
    <location>
        <begin position="105"/>
        <end position="108"/>
    </location>
</feature>
<feature type="helix" evidence="6">
    <location>
        <begin position="111"/>
        <end position="124"/>
    </location>
</feature>
<feature type="strand" evidence="6">
    <location>
        <begin position="128"/>
        <end position="134"/>
    </location>
</feature>
<feature type="strand" evidence="6">
    <location>
        <begin position="140"/>
        <end position="143"/>
    </location>
</feature>
<feature type="turn" evidence="6">
    <location>
        <begin position="145"/>
        <end position="147"/>
    </location>
</feature>
<feature type="helix" evidence="6">
    <location>
        <begin position="148"/>
        <end position="160"/>
    </location>
</feature>
<feature type="strand" evidence="6">
    <location>
        <begin position="163"/>
        <end position="170"/>
    </location>
</feature>
<feature type="helix" evidence="6">
    <location>
        <begin position="182"/>
        <end position="200"/>
    </location>
</feature>
<feature type="strand" evidence="6">
    <location>
        <begin position="206"/>
        <end position="211"/>
    </location>
</feature>
<feature type="helix" evidence="6">
    <location>
        <begin position="213"/>
        <end position="218"/>
    </location>
</feature>
<feature type="helix" evidence="6">
    <location>
        <begin position="220"/>
        <end position="222"/>
    </location>
</feature>
<feature type="strand" evidence="6">
    <location>
        <begin position="225"/>
        <end position="227"/>
    </location>
</feature>
<feature type="turn" evidence="6">
    <location>
        <begin position="231"/>
        <end position="235"/>
    </location>
</feature>
<feature type="helix" evidence="6">
    <location>
        <begin position="240"/>
        <end position="242"/>
    </location>
</feature>
<feature type="turn" evidence="6">
    <location>
        <begin position="243"/>
        <end position="246"/>
    </location>
</feature>
<feature type="strand" evidence="6">
    <location>
        <begin position="251"/>
        <end position="256"/>
    </location>
</feature>
<feature type="strand" evidence="6">
    <location>
        <begin position="259"/>
        <end position="263"/>
    </location>
</feature>
<feature type="strand" evidence="6">
    <location>
        <begin position="268"/>
        <end position="270"/>
    </location>
</feature>
<feature type="helix" evidence="6">
    <location>
        <begin position="271"/>
        <end position="273"/>
    </location>
</feature>
<feature type="strand" evidence="6">
    <location>
        <begin position="281"/>
        <end position="287"/>
    </location>
</feature>
<feature type="helix" evidence="6">
    <location>
        <begin position="290"/>
        <end position="292"/>
    </location>
</feature>
<feature type="helix" evidence="6">
    <location>
        <begin position="296"/>
        <end position="298"/>
    </location>
</feature>
<feature type="turn" evidence="6">
    <location>
        <begin position="299"/>
        <end position="301"/>
    </location>
</feature>
<feature type="strand" evidence="6">
    <location>
        <begin position="303"/>
        <end position="306"/>
    </location>
</feature>
<feature type="strand" evidence="6">
    <location>
        <begin position="309"/>
        <end position="315"/>
    </location>
</feature>
<feature type="strand" evidence="6">
    <location>
        <begin position="322"/>
        <end position="330"/>
    </location>
</feature>
<feature type="strand" evidence="6">
    <location>
        <begin position="338"/>
        <end position="342"/>
    </location>
</feature>
<feature type="helix" evidence="6">
    <location>
        <begin position="352"/>
        <end position="359"/>
    </location>
</feature>
<feature type="helix" evidence="6">
    <location>
        <begin position="363"/>
        <end position="367"/>
    </location>
</feature>
<feature type="strand" evidence="6">
    <location>
        <begin position="374"/>
        <end position="379"/>
    </location>
</feature>
<comment type="function">
    <text evidence="2">Catalyzes the interconversion of L-alanine and D-alanine. D-alanine plays a key role in peptidoglycan cross-linking.</text>
</comment>
<comment type="catalytic activity">
    <reaction evidence="1 2">
        <text>L-alanine = D-alanine</text>
        <dbReference type="Rhea" id="RHEA:20249"/>
        <dbReference type="ChEBI" id="CHEBI:57416"/>
        <dbReference type="ChEBI" id="CHEBI:57972"/>
        <dbReference type="EC" id="5.1.1.1"/>
    </reaction>
</comment>
<comment type="cofactor">
    <cofactor evidence="1 3">
        <name>pyridoxal 5'-phosphate</name>
        <dbReference type="ChEBI" id="CHEBI:597326"/>
    </cofactor>
</comment>
<comment type="activity regulation">
    <text evidence="2">Inhibited by the antituberculous drug D-cycloserine (DCS), which is a structural analog of D-alanine.</text>
</comment>
<comment type="biophysicochemical properties">
    <kinetics>
        <KM evidence="2">1.1 mM for D-alanine</KM>
        <KM evidence="2">1.2 mM for L-alanine</KM>
        <Vmax evidence="2">0.46 umol/min/mg enzyme toward D-alanine</Vmax>
        <Vmax evidence="2">0.51 umol/min/mg enzyme toward L-alanine</Vmax>
    </kinetics>
</comment>
<comment type="pathway">
    <text evidence="1">Amino-acid biosynthesis; D-alanine biosynthesis; D-alanine from L-alanine: step 1/1.</text>
</comment>
<comment type="subunit">
    <text evidence="3">Homodimer.</text>
</comment>
<comment type="similarity">
    <text evidence="1">Belongs to the alanine racemase family.</text>
</comment>
<comment type="sequence caution" evidence="5">
    <conflict type="erroneous initiation">
        <sequence resource="EMBL-CDS" id="AAD51033"/>
    </conflict>
    <text>Truncated N-terminus.</text>
</comment>
<comment type="sequence caution" evidence="5">
    <conflict type="erroneous initiation">
        <sequence resource="EMBL-CDS" id="CCP46245"/>
    </conflict>
    <text>Extended N-terminus.</text>
</comment>
<name>ALR_MYCTU</name>
<reference key="1">
    <citation type="journal article" date="2001" name="FEMS Microbiol. Lett.">
        <title>Characterization of the alanine racemases from two Mycobacteria.</title>
        <authorList>
            <person name="Strych U."/>
            <person name="Penland R.L."/>
            <person name="Jimenez M."/>
            <person name="Krause K.L."/>
            <person name="Benedik M.J."/>
        </authorList>
    </citation>
    <scope>NUCLEOTIDE SEQUENCE [GENOMIC DNA]</scope>
    <scope>FUNCTION</scope>
    <scope>CATALYTIC ACTIVITY</scope>
    <scope>ACTIVITY REGULATION</scope>
    <scope>BIOPHYSICOCHEMICAL PROPERTIES</scope>
    <scope>START SITE</scope>
</reference>
<reference key="2">
    <citation type="journal article" date="1998" name="Nature">
        <title>Deciphering the biology of Mycobacterium tuberculosis from the complete genome sequence.</title>
        <authorList>
            <person name="Cole S.T."/>
            <person name="Brosch R."/>
            <person name="Parkhill J."/>
            <person name="Garnier T."/>
            <person name="Churcher C.M."/>
            <person name="Harris D.E."/>
            <person name="Gordon S.V."/>
            <person name="Eiglmeier K."/>
            <person name="Gas S."/>
            <person name="Barry C.E. III"/>
            <person name="Tekaia F."/>
            <person name="Badcock K."/>
            <person name="Basham D."/>
            <person name="Brown D."/>
            <person name="Chillingworth T."/>
            <person name="Connor R."/>
            <person name="Davies R.M."/>
            <person name="Devlin K."/>
            <person name="Feltwell T."/>
            <person name="Gentles S."/>
            <person name="Hamlin N."/>
            <person name="Holroyd S."/>
            <person name="Hornsby T."/>
            <person name="Jagels K."/>
            <person name="Krogh A."/>
            <person name="McLean J."/>
            <person name="Moule S."/>
            <person name="Murphy L.D."/>
            <person name="Oliver S."/>
            <person name="Osborne J."/>
            <person name="Quail M.A."/>
            <person name="Rajandream M.A."/>
            <person name="Rogers J."/>
            <person name="Rutter S."/>
            <person name="Seeger K."/>
            <person name="Skelton S."/>
            <person name="Squares S."/>
            <person name="Squares R."/>
            <person name="Sulston J.E."/>
            <person name="Taylor K."/>
            <person name="Whitehead S."/>
            <person name="Barrell B.G."/>
        </authorList>
    </citation>
    <scope>NUCLEOTIDE SEQUENCE [LARGE SCALE GENOMIC DNA]</scope>
    <source>
        <strain>ATCC 25618 / H37Rv</strain>
    </source>
</reference>
<reference key="3">
    <citation type="journal article" date="2011" name="Mol. Cell. Proteomics">
        <title>Proteogenomic analysis of Mycobacterium tuberculosis by high resolution mass spectrometry.</title>
        <authorList>
            <person name="Kelkar D.S."/>
            <person name="Kumar D."/>
            <person name="Kumar P."/>
            <person name="Balakrishnan L."/>
            <person name="Muthusamy B."/>
            <person name="Yadav A.K."/>
            <person name="Shrivastava P."/>
            <person name="Marimuthu A."/>
            <person name="Anand S."/>
            <person name="Sundaram H."/>
            <person name="Kingsbury R."/>
            <person name="Harsha H.C."/>
            <person name="Nair B."/>
            <person name="Prasad T.S."/>
            <person name="Chauhan D.S."/>
            <person name="Katoch K."/>
            <person name="Katoch V.M."/>
            <person name="Kumar P."/>
            <person name="Chaerkady R."/>
            <person name="Ramachandran S."/>
            <person name="Dash D."/>
            <person name="Pandey A."/>
        </authorList>
    </citation>
    <scope>IDENTIFICATION BY MASS SPECTROMETRY [LARGE SCALE ANALYSIS]</scope>
    <source>
        <strain>ATCC 25618 / H37Rv</strain>
    </source>
</reference>
<reference key="4">
    <citation type="journal article" date="2005" name="Biochemistry">
        <title>The 1.9 A crystal structure of alanine racemase from Mycobacterium tuberculosis contains a conserved entryway into the active site.</title>
        <authorList>
            <person name="LeMagueres P."/>
            <person name="Im H."/>
            <person name="Ebalunode J."/>
            <person name="Strych U."/>
            <person name="Benedik M.J."/>
            <person name="Briggs J.M."/>
            <person name="Kohn H."/>
            <person name="Krause K.L."/>
        </authorList>
    </citation>
    <scope>X-RAY CRYSTALLOGRAPHY (1.90 ANGSTROMS) IN COMPLEX WITH PYRIDOXAL PHOSPHATE</scope>
    <scope>SUBUNIT</scope>
    <scope>COFACTOR</scope>
    <scope>PYRIDOXAL PHOSPHATE AT LYS-42</scope>
</reference>